<keyword id="KW-0165">Cleavage on pair of basic residues</keyword>
<keyword id="KW-0175">Coiled coil</keyword>
<keyword id="KW-1015">Disulfide bond</keyword>
<keyword id="KW-0325">Glycoprotein</keyword>
<keyword id="KW-1032">Host cell membrane</keyword>
<keyword id="KW-1043">Host membrane</keyword>
<keyword id="KW-0945">Host-virus interaction</keyword>
<keyword id="KW-0472">Membrane</keyword>
<keyword id="KW-0812">Transmembrane</keyword>
<keyword id="KW-1133">Transmembrane helix</keyword>
<keyword id="KW-1161">Viral attachment to host cell</keyword>
<keyword id="KW-0261">Viral envelope protein</keyword>
<keyword id="KW-0946">Virion</keyword>
<keyword id="KW-1160">Virus entry into host cell</keyword>
<accession>P22428</accession>
<reference key="1">
    <citation type="journal article" date="1987" name="Virology">
        <title>Antigenic variation and lentivirus persistence: variations in envelope gene sequences during EIAV infection resemble changes reported for sequential isolates of HIV.</title>
        <authorList>
            <person name="Payne S.L."/>
            <person name="Fang F.D."/>
            <person name="Liu C.P."/>
            <person name="Dhruva B.R."/>
            <person name="Rwambo P."/>
            <person name="Issel C.J."/>
            <person name="Montelaro R.C."/>
        </authorList>
    </citation>
    <scope>NUCLEOTIDE SEQUENCE [GENOMIC RNA]</scope>
</reference>
<dbReference type="EMBL" id="M18386">
    <property type="protein sequence ID" value="AAA66408.1"/>
    <property type="molecule type" value="Genomic_RNA"/>
</dbReference>
<dbReference type="PIR" id="B34027">
    <property type="entry name" value="VCLJE2"/>
</dbReference>
<dbReference type="GlyCosmos" id="P22428">
    <property type="glycosylation" value="22 sites, No reported glycans"/>
</dbReference>
<dbReference type="GO" id="GO:0020002">
    <property type="term" value="C:host cell plasma membrane"/>
    <property type="evidence" value="ECO:0007669"/>
    <property type="project" value="UniProtKB-SubCell"/>
</dbReference>
<dbReference type="GO" id="GO:0016020">
    <property type="term" value="C:membrane"/>
    <property type="evidence" value="ECO:0007669"/>
    <property type="project" value="UniProtKB-KW"/>
</dbReference>
<dbReference type="GO" id="GO:0019031">
    <property type="term" value="C:viral envelope"/>
    <property type="evidence" value="ECO:0007669"/>
    <property type="project" value="UniProtKB-KW"/>
</dbReference>
<dbReference type="GO" id="GO:0055036">
    <property type="term" value="C:virion membrane"/>
    <property type="evidence" value="ECO:0007669"/>
    <property type="project" value="UniProtKB-SubCell"/>
</dbReference>
<dbReference type="GO" id="GO:0005198">
    <property type="term" value="F:structural molecule activity"/>
    <property type="evidence" value="ECO:0007669"/>
    <property type="project" value="InterPro"/>
</dbReference>
<dbReference type="GO" id="GO:0046718">
    <property type="term" value="P:symbiont entry into host cell"/>
    <property type="evidence" value="ECO:0007669"/>
    <property type="project" value="UniProtKB-KW"/>
</dbReference>
<dbReference type="GO" id="GO:0019062">
    <property type="term" value="P:virion attachment to host cell"/>
    <property type="evidence" value="ECO:0007669"/>
    <property type="project" value="UniProtKB-KW"/>
</dbReference>
<dbReference type="CDD" id="cd09909">
    <property type="entry name" value="HIV-1-like_HR1-HR2"/>
    <property type="match status" value="1"/>
</dbReference>
<dbReference type="InterPro" id="IPR000328">
    <property type="entry name" value="GP41-like"/>
</dbReference>
<dbReference type="InterPro" id="IPR001361">
    <property type="entry name" value="Gp90_EIAV"/>
</dbReference>
<dbReference type="Pfam" id="PF00971">
    <property type="entry name" value="EIAV_GP90"/>
    <property type="match status" value="1"/>
</dbReference>
<dbReference type="Pfam" id="PF00517">
    <property type="entry name" value="GP41"/>
    <property type="match status" value="1"/>
</dbReference>
<organismHost>
    <name type="scientific">Equus asinus</name>
    <name type="common">Donkey</name>
    <name type="synonym">Equus africanus asinus</name>
    <dbReference type="NCBI Taxonomy" id="9793"/>
</organismHost>
<organismHost>
    <name type="scientific">Equus caballus</name>
    <name type="common">Horse</name>
    <dbReference type="NCBI Taxonomy" id="9796"/>
</organismHost>
<name>ENV_EIAV2</name>
<comment type="function">
    <text evidence="1">The surface protein (SU) attaches the virus to the host cell by binding to its receptor. This interaction triggers the refolding of the transmembrane protein (TM) and is thought to activate its fusogenic potential by unmasking its fusion peptide. Fusion occurs at the host cell plasma membrane (By similarity).</text>
</comment>
<comment type="function">
    <text evidence="1">The transmembrane protein (TM) acts as a class I viral fusion protein. Under the current model, the protein has at least 3 conformational states: pre-fusion native state, pre-hairpin intermediate state, and post-fusion hairpin state. During viral and target cell membrane fusion, the coiled coil regions (heptad repeats) assume a trimer-of-hairpins structure, positioning the fusion peptide in close proximity to the C-terminal region of the ectodomain. The formation of this structure appears to drive apposition and subsequent fusion of viral and target cell membranes. Membranes fusion leads to delivery of the nucleocapsid into the cytoplasm (By similarity).</text>
</comment>
<comment type="subunit">
    <text evidence="1">The mature envelope protein (Env) consists of a trimer of SU-TM heterodimers attached by noncovalent interactions or by a labile interchain disulfide bond.</text>
</comment>
<comment type="subcellular location">
    <molecule>Transmembrane protein</molecule>
    <subcellularLocation>
        <location evidence="1">Virion membrane</location>
        <topology evidence="1">Single-pass type I membrane protein</topology>
    </subcellularLocation>
    <subcellularLocation>
        <location evidence="1">Host cell membrane</location>
        <topology evidence="1">Single-pass type I membrane protein</topology>
    </subcellularLocation>
    <text evidence="1">It is probably concentrated at the site of budding and incorporated into the virions possibly by contacts between the cytoplasmic tail of Env and the N-terminus of Gag.</text>
</comment>
<comment type="subcellular location">
    <molecule>Surface protein</molecule>
    <subcellularLocation>
        <location evidence="1">Virion membrane</location>
        <topology evidence="1">Peripheral membrane protein</topology>
    </subcellularLocation>
    <subcellularLocation>
        <location evidence="1">Host cell membrane</location>
        <topology evidence="1">Peripheral membrane protein</topology>
    </subcellularLocation>
    <text evidence="1">The surface protein is not anchored to the viral envelope, but associates with the extravirion surface through its binding to TM. It is probably concentrated at the site of budding and incorporated into the virions possibly by contacts between the cytoplasmic tail of Env and the N-terminus of Gag (By similarity).</text>
</comment>
<comment type="PTM">
    <text evidence="1">Specific enzymatic cleavages in vivo yield mature proteins. Envelope glycoproteins are synthesized as an inactive precursor that is N-glycosylated and processed likely by host cell furin or by a furin-like protease in the Golgi to yield the mature SU and TM proteins. The cleavage site between SU and TM requires the minimal sequence [KR]-X-[KR]-R (By similarity).</text>
</comment>
<feature type="propeptide" id="PRO_0000239528" evidence="2">
    <location>
        <begin position="1"/>
        <end position="6"/>
    </location>
</feature>
<feature type="chain" id="PRO_0000038705" description="Envelope glycoprotein">
    <location>
        <begin position="7"/>
        <end position="859"/>
    </location>
</feature>
<feature type="chain" id="PRO_0000038706" description="Surface protein" evidence="1">
    <location>
        <begin position="7"/>
        <end position="444"/>
    </location>
</feature>
<feature type="chain" id="PRO_0000038707" description="Transmembrane protein" evidence="1">
    <location>
        <begin position="445"/>
        <end position="859"/>
    </location>
</feature>
<feature type="topological domain" description="Extracellular" evidence="2">
    <location>
        <begin position="7"/>
        <end position="614"/>
    </location>
</feature>
<feature type="transmembrane region" description="Helical" evidence="2">
    <location>
        <begin position="615"/>
        <end position="635"/>
    </location>
</feature>
<feature type="topological domain" description="Cytoplasmic" evidence="2">
    <location>
        <begin position="636"/>
        <end position="859"/>
    </location>
</feature>
<feature type="region of interest" description="Fusion peptide" evidence="2">
    <location>
        <begin position="446"/>
        <end position="466"/>
    </location>
</feature>
<feature type="region of interest" description="Immunosuppression" evidence="1">
    <location>
        <begin position="498"/>
        <end position="513"/>
    </location>
</feature>
<feature type="coiled-coil region" evidence="2">
    <location>
        <begin position="576"/>
        <end position="624"/>
    </location>
</feature>
<feature type="coiled-coil region" evidence="2">
    <location>
        <begin position="663"/>
        <end position="699"/>
    </location>
</feature>
<feature type="site" description="Cleavage; by host" evidence="1">
    <location>
        <begin position="444"/>
        <end position="445"/>
    </location>
</feature>
<feature type="site" description="Cleavage" evidence="1">
    <location>
        <begin position="684"/>
        <end position="685"/>
    </location>
</feature>
<feature type="glycosylation site" description="N-linked (GlcNAc...) asparagine; by host" evidence="2">
    <location>
        <position position="40"/>
    </location>
</feature>
<feature type="glycosylation site" description="N-linked (GlcNAc...) asparagine; by host" evidence="2">
    <location>
        <position position="112"/>
    </location>
</feature>
<feature type="glycosylation site" description="N-linked (GlcNAc...) asparagine; by host" evidence="2">
    <location>
        <position position="141"/>
    </location>
</feature>
<feature type="glycosylation site" description="N-linked (GlcNAc...) asparagine; by host" evidence="2">
    <location>
        <position position="148"/>
    </location>
</feature>
<feature type="glycosylation site" description="N-linked (GlcNAc...) asparagine; by host" evidence="2">
    <location>
        <position position="184"/>
    </location>
</feature>
<feature type="glycosylation site" description="N-linked (GlcNAc...) asparagine; by host" evidence="2">
    <location>
        <position position="201"/>
    </location>
</feature>
<feature type="glycosylation site" description="N-linked (GlcNAc...) asparagine; by host" evidence="2">
    <location>
        <position position="214"/>
    </location>
</feature>
<feature type="glycosylation site" description="N-linked (GlcNAc...) asparagine; by host" evidence="2">
    <location>
        <position position="233"/>
    </location>
</feature>
<feature type="glycosylation site" description="N-linked (GlcNAc...) asparagine; by host" evidence="2">
    <location>
        <position position="244"/>
    </location>
</feature>
<feature type="glycosylation site" description="N-linked (GlcNAc...) asparagine; by host" evidence="2">
    <location>
        <position position="282"/>
    </location>
</feature>
<feature type="glycosylation site" description="N-linked (GlcNAc...) asparagine; by host" evidence="2">
    <location>
        <position position="313"/>
    </location>
</feature>
<feature type="glycosylation site" description="N-linked (GlcNAc...) asparagine; by host" evidence="2">
    <location>
        <position position="340"/>
    </location>
</feature>
<feature type="glycosylation site" description="N-linked (GlcNAc...) asparagine; by host" evidence="2">
    <location>
        <position position="346"/>
    </location>
</feature>
<feature type="glycosylation site" description="N-linked (GlcNAc...) asparagine; by host" evidence="2">
    <location>
        <position position="368"/>
    </location>
</feature>
<feature type="glycosylation site" description="N-linked (GlcNAc...) asparagine; by host" evidence="2">
    <location>
        <position position="399"/>
    </location>
</feature>
<feature type="glycosylation site" description="N-linked (GlcNAc...) asparagine; by host" evidence="2">
    <location>
        <position position="406"/>
    </location>
</feature>
<feature type="glycosylation site" description="N-linked (GlcNAc...) asparagine; by host" evidence="2">
    <location>
        <position position="411"/>
    </location>
</feature>
<feature type="glycosylation site" description="N-linked (GlcNAc...) asparagine; by host" evidence="2">
    <location>
        <position position="422"/>
    </location>
</feature>
<feature type="glycosylation site" description="N-linked (GlcNAc...) asparagine; by host" evidence="2">
    <location>
        <position position="483"/>
    </location>
</feature>
<feature type="glycosylation site" description="N-linked (GlcNAc...) asparagine; by host" evidence="2">
    <location>
        <position position="490"/>
    </location>
</feature>
<feature type="glycosylation site" description="N-linked (GlcNAc...) asparagine; by host" evidence="2">
    <location>
        <position position="550"/>
    </location>
</feature>
<feature type="glycosylation site" description="N-linked (GlcNAc...) asparagine; by host" evidence="2">
    <location>
        <position position="557"/>
    </location>
</feature>
<protein>
    <recommendedName>
        <fullName>Envelope glycoprotein</fullName>
    </recommendedName>
    <alternativeName>
        <fullName>Env polyprotein</fullName>
    </alternativeName>
    <component>
        <recommendedName>
            <fullName>Surface protein</fullName>
            <shortName>SU</shortName>
        </recommendedName>
        <alternativeName>
            <fullName>Glycoprotein 90</fullName>
            <shortName>gp90</shortName>
        </alternativeName>
    </component>
    <component>
        <recommendedName>
            <fullName>Transmembrane protein</fullName>
            <shortName>TM</shortName>
        </recommendedName>
        <alternativeName>
            <fullName>Glycoprotein 45</fullName>
            <shortName>gp45</shortName>
        </alternativeName>
    </component>
</protein>
<evidence type="ECO:0000250" key="1"/>
<evidence type="ECO:0000255" key="2"/>
<proteinExistence type="inferred from homology"/>
<gene>
    <name type="primary">env</name>
</gene>
<organism>
    <name type="scientific">Equine infectious anemia virus (isolate P3.2-2)</name>
    <name type="common">EIAV</name>
    <dbReference type="NCBI Taxonomy" id="11667"/>
    <lineage>
        <taxon>Viruses</taxon>
        <taxon>Riboviria</taxon>
        <taxon>Pararnavirae</taxon>
        <taxon>Artverviricota</taxon>
        <taxon>Revtraviricetes</taxon>
        <taxon>Ortervirales</taxon>
        <taxon>Retroviridae</taxon>
        <taxon>Orthoretrovirinae</taxon>
        <taxon>Lentivirus</taxon>
        <taxon>Equine infectious anemia virus</taxon>
    </lineage>
</organism>
<sequence length="859" mass="97188">MVSIAFYGGIPGGISTPITQQSEKSKCEENTMFQPYCYNNDSKNSMAESKEARDQEMNLKEESKEEKRRNDWWKIGMFLLCLAGTTGGILWWYEGLPQQHYIGLVAIGGRLNGSGQSNAIECWGSFPGCRPFENYFSYETNRSMHMDNNTATLLEAYHREITFIYKSSCTDSDHCQEYQCKKVNLSSSDSSNSVRVEDVMNTTEYWGFKWLECNQTENFKTILVPENEMVNINDTDTWIPKGCNETWARVKRCPIDILYGIHPIRLCVQPPFFLVQEKGIANTSRIGNCGPTIFLGVLQDNKGVVRGDYTACNVSRLKIDRKDYTGIYQVPIFYTCTFTNITSCNNESIISVIMYETNQVQYLLCNNNNSNNYNCVVQSFGVIGQAHLELPRPNKRIRNQSFNQYNCSINNKTELETWKLVNTSGITPLPISSEANTGLIRHKRDFGISAIVAAIVAATAIAASATMSYVALTEVNKIMEVQNHTFEVENSTLNGMDLIERQIKILYAMILQTHADVQLLKERQQVEETFNLIGCIERTHVFCHTGHPWNMSWGHLNESTQWDDWVSKMEDLNQEILTILHGARNNLAQSMITFNTPDSIAQFGKDLWSHIGNWIPGLGASIIKYIVMFLLIYLLLTSSPKILRALWKVTSGAGSSGSRYLKKKFYHKHASREDTWDQAQHNIHLAGVTGGSGDKYCKQKYSRNDWNGESEEYNRRPKSWVKSIETFGESYISEKTKGEISQPGAAINEHKNGSGRNNPHQGSLDLEIRSEGGNIYDCCIKAQEGTLAIPCCGFPLWLFWGLVIIVGRIAGYGLRGLAVIIRICIRGLNLIFEIIRKMLDYIGRALNPGTSHVSMPQYV</sequence>